<protein>
    <recommendedName>
        <fullName>Uncharacterized protein HI_0488</fullName>
    </recommendedName>
</protein>
<evidence type="ECO:0000305" key="1"/>
<accession>P44004</accession>
<comment type="similarity">
    <text evidence="1">Belongs to the HAD-like hydrolase superfamily. CbbY/CbbZ/Gph/YieH family.</text>
</comment>
<name>Y488_HAEIN</name>
<reference key="1">
    <citation type="journal article" date="1995" name="Science">
        <title>Whole-genome random sequencing and assembly of Haemophilus influenzae Rd.</title>
        <authorList>
            <person name="Fleischmann R.D."/>
            <person name="Adams M.D."/>
            <person name="White O."/>
            <person name="Clayton R.A."/>
            <person name="Kirkness E.F."/>
            <person name="Kerlavage A.R."/>
            <person name="Bult C.J."/>
            <person name="Tomb J.-F."/>
            <person name="Dougherty B.A."/>
            <person name="Merrick J.M."/>
            <person name="McKenney K."/>
            <person name="Sutton G.G."/>
            <person name="FitzHugh W."/>
            <person name="Fields C.A."/>
            <person name="Gocayne J.D."/>
            <person name="Scott J.D."/>
            <person name="Shirley R."/>
            <person name="Liu L.-I."/>
            <person name="Glodek A."/>
            <person name="Kelley J.M."/>
            <person name="Weidman J.F."/>
            <person name="Phillips C.A."/>
            <person name="Spriggs T."/>
            <person name="Hedblom E."/>
            <person name="Cotton M.D."/>
            <person name="Utterback T.R."/>
            <person name="Hanna M.C."/>
            <person name="Nguyen D.T."/>
            <person name="Saudek D.M."/>
            <person name="Brandon R.C."/>
            <person name="Fine L.D."/>
            <person name="Fritchman J.L."/>
            <person name="Fuhrmann J.L."/>
            <person name="Geoghagen N.S.M."/>
            <person name="Gnehm C.L."/>
            <person name="McDonald L.A."/>
            <person name="Small K.V."/>
            <person name="Fraser C.M."/>
            <person name="Smith H.O."/>
            <person name="Venter J.C."/>
        </authorList>
    </citation>
    <scope>NUCLEOTIDE SEQUENCE [LARGE SCALE GENOMIC DNA]</scope>
    <source>
        <strain>ATCC 51907 / DSM 11121 / KW20 / Rd</strain>
    </source>
</reference>
<keyword id="KW-1185">Reference proteome</keyword>
<proteinExistence type="inferred from homology"/>
<feature type="chain" id="PRO_0000108064" description="Uncharacterized protein HI_0488">
    <location>
        <begin position="1"/>
        <end position="200"/>
    </location>
</feature>
<sequence>MLDYEIFNPYEGLIFDMDGTLIDTMPVHAQAWTMVGKKFGYEFDFQIMYNFGGATVRTIAGEMMKAANMPLDRIEDVLAAKRELSYQLIPTQSKLLPTFEIVKSFHQKKPIALGSGSHRKIIDMLMDKLAIAPYFNAIVSADDVKEHKPHPETFLRCAELIQANPSRCIVFEDADLGVQAGLSAGMDVFDVRTREIISPR</sequence>
<dbReference type="EMBL" id="L42023">
    <property type="protein sequence ID" value="AAC22147.1"/>
    <property type="molecule type" value="Genomic_DNA"/>
</dbReference>
<dbReference type="PIR" id="D64008">
    <property type="entry name" value="D64008"/>
</dbReference>
<dbReference type="RefSeq" id="NP_438649.1">
    <property type="nucleotide sequence ID" value="NC_000907.1"/>
</dbReference>
<dbReference type="SMR" id="P44004"/>
<dbReference type="STRING" id="71421.HI_0488"/>
<dbReference type="DNASU" id="949569"/>
<dbReference type="EnsemblBacteria" id="AAC22147">
    <property type="protein sequence ID" value="AAC22147"/>
    <property type="gene ID" value="HI_0488"/>
</dbReference>
<dbReference type="KEGG" id="hin:HI_0488"/>
<dbReference type="PATRIC" id="fig|71421.8.peg.508"/>
<dbReference type="eggNOG" id="COG0637">
    <property type="taxonomic scope" value="Bacteria"/>
</dbReference>
<dbReference type="HOGENOM" id="CLU_045011_13_3_6"/>
<dbReference type="OrthoDB" id="9782449at2"/>
<dbReference type="PhylomeDB" id="P44004"/>
<dbReference type="BioCyc" id="HINF71421:G1GJ1-504-MONOMER"/>
<dbReference type="Proteomes" id="UP000000579">
    <property type="component" value="Chromosome"/>
</dbReference>
<dbReference type="GO" id="GO:0008801">
    <property type="term" value="F:beta-phosphoglucomutase activity"/>
    <property type="evidence" value="ECO:0000318"/>
    <property type="project" value="GO_Central"/>
</dbReference>
<dbReference type="GO" id="GO:0050308">
    <property type="term" value="F:sugar-phosphatase activity"/>
    <property type="evidence" value="ECO:0000318"/>
    <property type="project" value="GO_Central"/>
</dbReference>
<dbReference type="GO" id="GO:0005975">
    <property type="term" value="P:carbohydrate metabolic process"/>
    <property type="evidence" value="ECO:0000318"/>
    <property type="project" value="GO_Central"/>
</dbReference>
<dbReference type="CDD" id="cd07505">
    <property type="entry name" value="HAD_BPGM-like"/>
    <property type="match status" value="1"/>
</dbReference>
<dbReference type="FunFam" id="3.40.50.1000:FF:000038">
    <property type="entry name" value="Fructose-1-phosphate/6-phosphogluconate phosphatase"/>
    <property type="match status" value="1"/>
</dbReference>
<dbReference type="Gene3D" id="3.40.50.1000">
    <property type="entry name" value="HAD superfamily/HAD-like"/>
    <property type="match status" value="1"/>
</dbReference>
<dbReference type="Gene3D" id="1.10.150.240">
    <property type="entry name" value="Putative phosphatase, domain 2"/>
    <property type="match status" value="1"/>
</dbReference>
<dbReference type="InterPro" id="IPR010976">
    <property type="entry name" value="B-phosphoglucomutase_hydrolase"/>
</dbReference>
<dbReference type="InterPro" id="IPR036412">
    <property type="entry name" value="HAD-like_sf"/>
</dbReference>
<dbReference type="InterPro" id="IPR051806">
    <property type="entry name" value="HAD-like_SPP"/>
</dbReference>
<dbReference type="InterPro" id="IPR006439">
    <property type="entry name" value="HAD-SF_hydro_IA"/>
</dbReference>
<dbReference type="InterPro" id="IPR041492">
    <property type="entry name" value="HAD_2"/>
</dbReference>
<dbReference type="InterPro" id="IPR023214">
    <property type="entry name" value="HAD_sf"/>
</dbReference>
<dbReference type="InterPro" id="IPR023198">
    <property type="entry name" value="PGP-like_dom2"/>
</dbReference>
<dbReference type="NCBIfam" id="TIGR01509">
    <property type="entry name" value="HAD-SF-IA-v3"/>
    <property type="match status" value="1"/>
</dbReference>
<dbReference type="NCBIfam" id="TIGR02009">
    <property type="entry name" value="PGMB-YQAB-SF"/>
    <property type="match status" value="1"/>
</dbReference>
<dbReference type="PANTHER" id="PTHR43481">
    <property type="entry name" value="FRUCTOSE-1-PHOSPHATE PHOSPHATASE"/>
    <property type="match status" value="1"/>
</dbReference>
<dbReference type="PANTHER" id="PTHR43481:SF4">
    <property type="entry name" value="GLYCEROL-1-PHOSPHATE PHOSPHOHYDROLASE 1-RELATED"/>
    <property type="match status" value="1"/>
</dbReference>
<dbReference type="Pfam" id="PF13419">
    <property type="entry name" value="HAD_2"/>
    <property type="match status" value="1"/>
</dbReference>
<dbReference type="PRINTS" id="PR00413">
    <property type="entry name" value="HADHALOGNASE"/>
</dbReference>
<dbReference type="SFLD" id="SFLDG01135">
    <property type="entry name" value="C1.5.6:_HAD__Beta-PGM__Phospha"/>
    <property type="match status" value="1"/>
</dbReference>
<dbReference type="SFLD" id="SFLDS00003">
    <property type="entry name" value="Haloacid_Dehalogenase"/>
    <property type="match status" value="1"/>
</dbReference>
<dbReference type="SUPFAM" id="SSF56784">
    <property type="entry name" value="HAD-like"/>
    <property type="match status" value="1"/>
</dbReference>
<organism>
    <name type="scientific">Haemophilus influenzae (strain ATCC 51907 / DSM 11121 / KW20 / Rd)</name>
    <dbReference type="NCBI Taxonomy" id="71421"/>
    <lineage>
        <taxon>Bacteria</taxon>
        <taxon>Pseudomonadati</taxon>
        <taxon>Pseudomonadota</taxon>
        <taxon>Gammaproteobacteria</taxon>
        <taxon>Pasteurellales</taxon>
        <taxon>Pasteurellaceae</taxon>
        <taxon>Haemophilus</taxon>
    </lineage>
</organism>
<gene>
    <name type="ordered locus">HI_0488</name>
</gene>